<evidence type="ECO:0000255" key="1">
    <source>
        <dbReference type="HAMAP-Rule" id="MF_01390"/>
    </source>
</evidence>
<sequence>MEELQLQGYLEKDGFRQQNFLYPLIFQEYIYTLAHDHGLNSSIFYEPMEIVGLGYDNKSSSVLVKRLITRMYQQNSLIYSMNDFNQNRFVGHNNSFYSNFYSKMVSEGFAVIVEIPFSLRLVPSSEEIPKSQNLRSIHSIFPFLEDKLSHLNYVLDILIPYPIHLEILVKILQCWIQDVPSLHFLRFFLHEFHNWNNLITPTKSISVFSKENKRLFRILYNSYVSEYEFVFVFLRKQSYYLRSTSSGAFLERTHFYVKIEHLIDVCHNHFQKILWFFKDSFMHYVRYKGKAILASRGTYLLIKKWKCYLVNFWQYNLNFWSKPYRIHINPFSNYSFYFLGYISSVLINPSAVKNQMLENFYLVDTLTQKFDTIVPVIPLIGSLSKAKFCTILGHPISKPIWAELSDSDIIDRFGRICRNLSHYHSGSSKKQSLYRIKYILRLSCARTLARKHKSTVRNLLQRLGSGLLEEFFTEEEQVISPIFQKTTLFPLHGSHRERIWYLDITRINDLANYLDWS</sequence>
<comment type="function">
    <text evidence="1">Usually encoded in the trnK tRNA gene intron. Probably assists in splicing its own and other chloroplast group II introns.</text>
</comment>
<comment type="subcellular location">
    <subcellularLocation>
        <location>Plastid</location>
        <location>Chloroplast</location>
    </subcellularLocation>
</comment>
<comment type="similarity">
    <text evidence="1">Belongs to the intron maturase 2 family. MatK subfamily.</text>
</comment>
<feature type="chain" id="PRO_0000143576" description="Maturase K">
    <location>
        <begin position="1"/>
        <end position="517"/>
    </location>
</feature>
<organism>
    <name type="scientific">Paris tetraphylla</name>
    <dbReference type="NCBI Taxonomy" id="49670"/>
    <lineage>
        <taxon>Eukaryota</taxon>
        <taxon>Viridiplantae</taxon>
        <taxon>Streptophyta</taxon>
        <taxon>Embryophyta</taxon>
        <taxon>Tracheophyta</taxon>
        <taxon>Spermatophyta</taxon>
        <taxon>Magnoliopsida</taxon>
        <taxon>Liliopsida</taxon>
        <taxon>Liliales</taxon>
        <taxon>Melanthiaceae</taxon>
        <taxon>Paris</taxon>
    </lineage>
</organism>
<accession>Q9XR19</accession>
<protein>
    <recommendedName>
        <fullName evidence="1">Maturase K</fullName>
    </recommendedName>
    <alternativeName>
        <fullName evidence="1">Intron maturase</fullName>
    </alternativeName>
</protein>
<dbReference type="EMBL" id="AB018833">
    <property type="protein sequence ID" value="BAA78351.1"/>
    <property type="molecule type" value="Genomic_DNA"/>
</dbReference>
<dbReference type="RefSeq" id="YP_009737459.1">
    <property type="nucleotide sequence ID" value="NC_046461.1"/>
</dbReference>
<dbReference type="GeneID" id="44801795"/>
<dbReference type="GO" id="GO:0009507">
    <property type="term" value="C:chloroplast"/>
    <property type="evidence" value="ECO:0007669"/>
    <property type="project" value="UniProtKB-SubCell"/>
</dbReference>
<dbReference type="GO" id="GO:0003723">
    <property type="term" value="F:RNA binding"/>
    <property type="evidence" value="ECO:0007669"/>
    <property type="project" value="UniProtKB-KW"/>
</dbReference>
<dbReference type="GO" id="GO:0006397">
    <property type="term" value="P:mRNA processing"/>
    <property type="evidence" value="ECO:0007669"/>
    <property type="project" value="UniProtKB-KW"/>
</dbReference>
<dbReference type="GO" id="GO:0008380">
    <property type="term" value="P:RNA splicing"/>
    <property type="evidence" value="ECO:0007669"/>
    <property type="project" value="UniProtKB-UniRule"/>
</dbReference>
<dbReference type="GO" id="GO:0008033">
    <property type="term" value="P:tRNA processing"/>
    <property type="evidence" value="ECO:0007669"/>
    <property type="project" value="UniProtKB-KW"/>
</dbReference>
<dbReference type="HAMAP" id="MF_01390">
    <property type="entry name" value="MatK"/>
    <property type="match status" value="1"/>
</dbReference>
<dbReference type="InterPro" id="IPR024937">
    <property type="entry name" value="Domain_X"/>
</dbReference>
<dbReference type="InterPro" id="IPR002866">
    <property type="entry name" value="Maturase_MatK"/>
</dbReference>
<dbReference type="InterPro" id="IPR024942">
    <property type="entry name" value="Maturase_MatK_N"/>
</dbReference>
<dbReference type="PANTHER" id="PTHR34811">
    <property type="entry name" value="MATURASE K"/>
    <property type="match status" value="1"/>
</dbReference>
<dbReference type="PANTHER" id="PTHR34811:SF1">
    <property type="entry name" value="MATURASE K"/>
    <property type="match status" value="1"/>
</dbReference>
<dbReference type="Pfam" id="PF01348">
    <property type="entry name" value="Intron_maturas2"/>
    <property type="match status" value="1"/>
</dbReference>
<dbReference type="Pfam" id="PF01824">
    <property type="entry name" value="MatK_N"/>
    <property type="match status" value="1"/>
</dbReference>
<proteinExistence type="inferred from homology"/>
<reference key="1">
    <citation type="journal article" date="1999" name="Plant Species Biol.">
        <title>Molecular Systematics of Trilliaceae II. Phylogenetic analyses of Trillium and its allies using sequences of rbcL and matK gene of cpDNA and internal transcribed spacers (ITS) of 18S-26S nuclear ribosomal DNA.</title>
        <authorList>
            <person name="Kazempour Osaloo S."/>
            <person name="Kawano S."/>
        </authorList>
    </citation>
    <scope>NUCLEOTIDE SEQUENCE [GENOMIC DNA]</scope>
</reference>
<name>MATK_PARTT</name>
<gene>
    <name evidence="1" type="primary">matK</name>
</gene>
<geneLocation type="chloroplast"/>
<keyword id="KW-0150">Chloroplast</keyword>
<keyword id="KW-0507">mRNA processing</keyword>
<keyword id="KW-0934">Plastid</keyword>
<keyword id="KW-0694">RNA-binding</keyword>
<keyword id="KW-0819">tRNA processing</keyword>